<organism>
    <name type="scientific">Homo sapiens</name>
    <name type="common">Human</name>
    <dbReference type="NCBI Taxonomy" id="9606"/>
    <lineage>
        <taxon>Eukaryota</taxon>
        <taxon>Metazoa</taxon>
        <taxon>Chordata</taxon>
        <taxon>Craniata</taxon>
        <taxon>Vertebrata</taxon>
        <taxon>Euteleostomi</taxon>
        <taxon>Mammalia</taxon>
        <taxon>Eutheria</taxon>
        <taxon>Euarchontoglires</taxon>
        <taxon>Primates</taxon>
        <taxon>Haplorrhini</taxon>
        <taxon>Catarrhini</taxon>
        <taxon>Hominidae</taxon>
        <taxon>Homo</taxon>
    </lineage>
</organism>
<feature type="chain" id="PRO_0000336056" description="Putative ankyrin repeat domain-containing protein 20A12 pseudogene">
    <location>
        <begin position="1"/>
        <end position="263"/>
    </location>
</feature>
<feature type="coiled-coil region" evidence="1">
    <location>
        <begin position="65"/>
        <end position="121"/>
    </location>
</feature>
<feature type="coiled-coil region" evidence="1">
    <location>
        <begin position="171"/>
        <end position="263"/>
    </location>
</feature>
<feature type="sequence conflict" description="In Ref. 1; BAC03393." evidence="2" ref="1">
    <original>I</original>
    <variation>L</variation>
    <location>
        <position position="36"/>
    </location>
</feature>
<accession>Q8NF67</accession>
<proteinExistence type="uncertain"/>
<gene>
    <name evidence="3" type="primary">ANKRD20A12P</name>
</gene>
<evidence type="ECO:0000255" key="1"/>
<evidence type="ECO:0000305" key="2"/>
<evidence type="ECO:0000312" key="3">
    <source>
        <dbReference type="HGNC" id="HGNC:43603"/>
    </source>
</evidence>
<sequence>MKEMYENAEDKVNNSTGKWSCVEERICHLQHENPCIEQQLDDVHQKEDHKEIVTNIQRGFIESGKKDLMLEEKNKKLMNECDHLKESLFQYEREKAERVVVVRQLQQEAADSLKKLTMLESPLEGISHYHINLDETQVPKKKLFQVESQFDDLMVEKEAVSSKCVNLAKENQVFQQKLLSMKKVQQECEKLEEDKKMLEEEILNLKTHMENSMVELSKLQEYKSELDERAMQAVEKLEEIHLQEQAQYKKQLEQLNKDIIQLH</sequence>
<dbReference type="EMBL" id="AK090412">
    <property type="protein sequence ID" value="BAC03393.1"/>
    <property type="status" value="ALT_INIT"/>
    <property type="molecule type" value="mRNA"/>
</dbReference>
<dbReference type="EMBL" id="AL583842">
    <property type="status" value="NOT_ANNOTATED_CDS"/>
    <property type="molecule type" value="Genomic_DNA"/>
</dbReference>
<dbReference type="SMR" id="Q8NF67"/>
<dbReference type="IntAct" id="Q8NF67">
    <property type="interactions" value="3"/>
</dbReference>
<dbReference type="BioMuta" id="HGNC:43603"/>
<dbReference type="DMDM" id="338817985"/>
<dbReference type="jPOST" id="Q8NF67"/>
<dbReference type="MassIVE" id="Q8NF67"/>
<dbReference type="AGR" id="HGNC:43603"/>
<dbReference type="GeneCards" id="ANKRD20A12P"/>
<dbReference type="HGNC" id="HGNC:43603">
    <property type="gene designation" value="ANKRD20A12P"/>
</dbReference>
<dbReference type="neXtProt" id="NX_Q8NF67"/>
<dbReference type="InParanoid" id="Q8NF67"/>
<dbReference type="PAN-GO" id="Q8NF67">
    <property type="GO annotations" value="0 GO annotations based on evolutionary models"/>
</dbReference>
<dbReference type="PathwayCommons" id="Q8NF67"/>
<dbReference type="SignaLink" id="Q8NF67"/>
<dbReference type="ChiTaRS" id="ANKRD20A12P">
    <property type="organism name" value="human"/>
</dbReference>
<dbReference type="Pharos" id="Q8NF67">
    <property type="development level" value="Tdark"/>
</dbReference>
<dbReference type="Proteomes" id="UP000005640">
    <property type="component" value="Unplaced"/>
</dbReference>
<dbReference type="RNAct" id="Q8NF67">
    <property type="molecule type" value="protein"/>
</dbReference>
<dbReference type="InterPro" id="IPR050657">
    <property type="entry name" value="Ankyrin_repeat_domain"/>
</dbReference>
<dbReference type="InterPro" id="IPR039497">
    <property type="entry name" value="CC144C-like_CC_dom"/>
</dbReference>
<dbReference type="PANTHER" id="PTHR24147">
    <property type="entry name" value="ANKYRIN REPEAT DOMAIN 36-RELATED"/>
    <property type="match status" value="1"/>
</dbReference>
<dbReference type="PANTHER" id="PTHR24147:SF1">
    <property type="entry name" value="ANKYRIN REPEAT DOMAIN-CONTAINING PROTEIN 20A1-RELATED"/>
    <property type="match status" value="1"/>
</dbReference>
<dbReference type="Pfam" id="PF14915">
    <property type="entry name" value="CCDC144C"/>
    <property type="match status" value="1"/>
</dbReference>
<comment type="caution">
    <text evidence="2">Could be the product of a pseudogene.</text>
</comment>
<comment type="sequence caution" evidence="2">
    <conflict type="erroneous initiation">
        <sequence resource="EMBL-CDS" id="BAC03393"/>
    </conflict>
    <text>Extended N-terminus.</text>
</comment>
<protein>
    <recommendedName>
        <fullName evidence="2">Putative ankyrin repeat domain-containing protein 20A12 pseudogene</fullName>
    </recommendedName>
</protein>
<name>A2012_HUMAN</name>
<reference key="1">
    <citation type="journal article" date="2004" name="Nat. Genet.">
        <title>Complete sequencing and characterization of 21,243 full-length human cDNAs.</title>
        <authorList>
            <person name="Ota T."/>
            <person name="Suzuki Y."/>
            <person name="Nishikawa T."/>
            <person name="Otsuki T."/>
            <person name="Sugiyama T."/>
            <person name="Irie R."/>
            <person name="Wakamatsu A."/>
            <person name="Hayashi K."/>
            <person name="Sato H."/>
            <person name="Nagai K."/>
            <person name="Kimura K."/>
            <person name="Makita H."/>
            <person name="Sekine M."/>
            <person name="Obayashi M."/>
            <person name="Nishi T."/>
            <person name="Shibahara T."/>
            <person name="Tanaka T."/>
            <person name="Ishii S."/>
            <person name="Yamamoto J."/>
            <person name="Saito K."/>
            <person name="Kawai Y."/>
            <person name="Isono Y."/>
            <person name="Nakamura Y."/>
            <person name="Nagahari K."/>
            <person name="Murakami K."/>
            <person name="Yasuda T."/>
            <person name="Iwayanagi T."/>
            <person name="Wagatsuma M."/>
            <person name="Shiratori A."/>
            <person name="Sudo H."/>
            <person name="Hosoiri T."/>
            <person name="Kaku Y."/>
            <person name="Kodaira H."/>
            <person name="Kondo H."/>
            <person name="Sugawara M."/>
            <person name="Takahashi M."/>
            <person name="Kanda K."/>
            <person name="Yokoi T."/>
            <person name="Furuya T."/>
            <person name="Kikkawa E."/>
            <person name="Omura Y."/>
            <person name="Abe K."/>
            <person name="Kamihara K."/>
            <person name="Katsuta N."/>
            <person name="Sato K."/>
            <person name="Tanikawa M."/>
            <person name="Yamazaki M."/>
            <person name="Ninomiya K."/>
            <person name="Ishibashi T."/>
            <person name="Yamashita H."/>
            <person name="Murakawa K."/>
            <person name="Fujimori K."/>
            <person name="Tanai H."/>
            <person name="Kimata M."/>
            <person name="Watanabe M."/>
            <person name="Hiraoka S."/>
            <person name="Chiba Y."/>
            <person name="Ishida S."/>
            <person name="Ono Y."/>
            <person name="Takiguchi S."/>
            <person name="Watanabe S."/>
            <person name="Yosida M."/>
            <person name="Hotuta T."/>
            <person name="Kusano J."/>
            <person name="Kanehori K."/>
            <person name="Takahashi-Fujii A."/>
            <person name="Hara H."/>
            <person name="Tanase T.-O."/>
            <person name="Nomura Y."/>
            <person name="Togiya S."/>
            <person name="Komai F."/>
            <person name="Hara R."/>
            <person name="Takeuchi K."/>
            <person name="Arita M."/>
            <person name="Imose N."/>
            <person name="Musashino K."/>
            <person name="Yuuki H."/>
            <person name="Oshima A."/>
            <person name="Sasaki N."/>
            <person name="Aotsuka S."/>
            <person name="Yoshikawa Y."/>
            <person name="Matsunawa H."/>
            <person name="Ichihara T."/>
            <person name="Shiohata N."/>
            <person name="Sano S."/>
            <person name="Moriya S."/>
            <person name="Momiyama H."/>
            <person name="Satoh N."/>
            <person name="Takami S."/>
            <person name="Terashima Y."/>
            <person name="Suzuki O."/>
            <person name="Nakagawa S."/>
            <person name="Senoh A."/>
            <person name="Mizoguchi H."/>
            <person name="Goto Y."/>
            <person name="Shimizu F."/>
            <person name="Wakebe H."/>
            <person name="Hishigaki H."/>
            <person name="Watanabe T."/>
            <person name="Sugiyama A."/>
            <person name="Takemoto M."/>
            <person name="Kawakami B."/>
            <person name="Yamazaki M."/>
            <person name="Watanabe K."/>
            <person name="Kumagai A."/>
            <person name="Itakura S."/>
            <person name="Fukuzumi Y."/>
            <person name="Fujimori Y."/>
            <person name="Komiyama M."/>
            <person name="Tashiro H."/>
            <person name="Tanigami A."/>
            <person name="Fujiwara T."/>
            <person name="Ono T."/>
            <person name="Yamada K."/>
            <person name="Fujii Y."/>
            <person name="Ozaki K."/>
            <person name="Hirao M."/>
            <person name="Ohmori Y."/>
            <person name="Kawabata A."/>
            <person name="Hikiji T."/>
            <person name="Kobatake N."/>
            <person name="Inagaki H."/>
            <person name="Ikema Y."/>
            <person name="Okamoto S."/>
            <person name="Okitani R."/>
            <person name="Kawakami T."/>
            <person name="Noguchi S."/>
            <person name="Itoh T."/>
            <person name="Shigeta K."/>
            <person name="Senba T."/>
            <person name="Matsumura K."/>
            <person name="Nakajima Y."/>
            <person name="Mizuno T."/>
            <person name="Morinaga M."/>
            <person name="Sasaki M."/>
            <person name="Togashi T."/>
            <person name="Oyama M."/>
            <person name="Hata H."/>
            <person name="Watanabe M."/>
            <person name="Komatsu T."/>
            <person name="Mizushima-Sugano J."/>
            <person name="Satoh T."/>
            <person name="Shirai Y."/>
            <person name="Takahashi Y."/>
            <person name="Nakagawa K."/>
            <person name="Okumura K."/>
            <person name="Nagase T."/>
            <person name="Nomura N."/>
            <person name="Kikuchi H."/>
            <person name="Masuho Y."/>
            <person name="Yamashita R."/>
            <person name="Nakai K."/>
            <person name="Yada T."/>
            <person name="Nakamura Y."/>
            <person name="Ohara O."/>
            <person name="Isogai T."/>
            <person name="Sugano S."/>
        </authorList>
    </citation>
    <scope>NUCLEOTIDE SEQUENCE [LARGE SCALE MRNA]</scope>
    <source>
        <tissue>Spleen</tissue>
    </source>
</reference>
<reference key="2">
    <citation type="journal article" date="2006" name="Nature">
        <title>The DNA sequence and biological annotation of human chromosome 1.</title>
        <authorList>
            <person name="Gregory S.G."/>
            <person name="Barlow K.F."/>
            <person name="McLay K.E."/>
            <person name="Kaul R."/>
            <person name="Swarbreck D."/>
            <person name="Dunham A."/>
            <person name="Scott C.E."/>
            <person name="Howe K.L."/>
            <person name="Woodfine K."/>
            <person name="Spencer C.C.A."/>
            <person name="Jones M.C."/>
            <person name="Gillson C."/>
            <person name="Searle S."/>
            <person name="Zhou Y."/>
            <person name="Kokocinski F."/>
            <person name="McDonald L."/>
            <person name="Evans R."/>
            <person name="Phillips K."/>
            <person name="Atkinson A."/>
            <person name="Cooper R."/>
            <person name="Jones C."/>
            <person name="Hall R.E."/>
            <person name="Andrews T.D."/>
            <person name="Lloyd C."/>
            <person name="Ainscough R."/>
            <person name="Almeida J.P."/>
            <person name="Ambrose K.D."/>
            <person name="Anderson F."/>
            <person name="Andrew R.W."/>
            <person name="Ashwell R.I.S."/>
            <person name="Aubin K."/>
            <person name="Babbage A.K."/>
            <person name="Bagguley C.L."/>
            <person name="Bailey J."/>
            <person name="Beasley H."/>
            <person name="Bethel G."/>
            <person name="Bird C.P."/>
            <person name="Bray-Allen S."/>
            <person name="Brown J.Y."/>
            <person name="Brown A.J."/>
            <person name="Buckley D."/>
            <person name="Burton J."/>
            <person name="Bye J."/>
            <person name="Carder C."/>
            <person name="Chapman J.C."/>
            <person name="Clark S.Y."/>
            <person name="Clarke G."/>
            <person name="Clee C."/>
            <person name="Cobley V."/>
            <person name="Collier R.E."/>
            <person name="Corby N."/>
            <person name="Coville G.J."/>
            <person name="Davies J."/>
            <person name="Deadman R."/>
            <person name="Dunn M."/>
            <person name="Earthrowl M."/>
            <person name="Ellington A.G."/>
            <person name="Errington H."/>
            <person name="Frankish A."/>
            <person name="Frankland J."/>
            <person name="French L."/>
            <person name="Garner P."/>
            <person name="Garnett J."/>
            <person name="Gay L."/>
            <person name="Ghori M.R.J."/>
            <person name="Gibson R."/>
            <person name="Gilby L.M."/>
            <person name="Gillett W."/>
            <person name="Glithero R.J."/>
            <person name="Grafham D.V."/>
            <person name="Griffiths C."/>
            <person name="Griffiths-Jones S."/>
            <person name="Grocock R."/>
            <person name="Hammond S."/>
            <person name="Harrison E.S.I."/>
            <person name="Hart E."/>
            <person name="Haugen E."/>
            <person name="Heath P.D."/>
            <person name="Holmes S."/>
            <person name="Holt K."/>
            <person name="Howden P.J."/>
            <person name="Hunt A.R."/>
            <person name="Hunt S.E."/>
            <person name="Hunter G."/>
            <person name="Isherwood J."/>
            <person name="James R."/>
            <person name="Johnson C."/>
            <person name="Johnson D."/>
            <person name="Joy A."/>
            <person name="Kay M."/>
            <person name="Kershaw J.K."/>
            <person name="Kibukawa M."/>
            <person name="Kimberley A.M."/>
            <person name="King A."/>
            <person name="Knights A.J."/>
            <person name="Lad H."/>
            <person name="Laird G."/>
            <person name="Lawlor S."/>
            <person name="Leongamornlert D.A."/>
            <person name="Lloyd D.M."/>
            <person name="Loveland J."/>
            <person name="Lovell J."/>
            <person name="Lush M.J."/>
            <person name="Lyne R."/>
            <person name="Martin S."/>
            <person name="Mashreghi-Mohammadi M."/>
            <person name="Matthews L."/>
            <person name="Matthews N.S.W."/>
            <person name="McLaren S."/>
            <person name="Milne S."/>
            <person name="Mistry S."/>
            <person name="Moore M.J.F."/>
            <person name="Nickerson T."/>
            <person name="O'Dell C.N."/>
            <person name="Oliver K."/>
            <person name="Palmeiri A."/>
            <person name="Palmer S.A."/>
            <person name="Parker A."/>
            <person name="Patel D."/>
            <person name="Pearce A.V."/>
            <person name="Peck A.I."/>
            <person name="Pelan S."/>
            <person name="Phelps K."/>
            <person name="Phillimore B.J."/>
            <person name="Plumb R."/>
            <person name="Rajan J."/>
            <person name="Raymond C."/>
            <person name="Rouse G."/>
            <person name="Saenphimmachak C."/>
            <person name="Sehra H.K."/>
            <person name="Sheridan E."/>
            <person name="Shownkeen R."/>
            <person name="Sims S."/>
            <person name="Skuce C.D."/>
            <person name="Smith M."/>
            <person name="Steward C."/>
            <person name="Subramanian S."/>
            <person name="Sycamore N."/>
            <person name="Tracey A."/>
            <person name="Tromans A."/>
            <person name="Van Helmond Z."/>
            <person name="Wall M."/>
            <person name="Wallis J.M."/>
            <person name="White S."/>
            <person name="Whitehead S.L."/>
            <person name="Wilkinson J.E."/>
            <person name="Willey D.L."/>
            <person name="Williams H."/>
            <person name="Wilming L."/>
            <person name="Wray P.W."/>
            <person name="Wu Z."/>
            <person name="Coulson A."/>
            <person name="Vaudin M."/>
            <person name="Sulston J.E."/>
            <person name="Durbin R.M."/>
            <person name="Hubbard T."/>
            <person name="Wooster R."/>
            <person name="Dunham I."/>
            <person name="Carter N.P."/>
            <person name="McVean G."/>
            <person name="Ross M.T."/>
            <person name="Harrow J."/>
            <person name="Olson M.V."/>
            <person name="Beck S."/>
            <person name="Rogers J."/>
            <person name="Bentley D.R."/>
        </authorList>
    </citation>
    <scope>NUCLEOTIDE SEQUENCE [LARGE SCALE GENOMIC DNA]</scope>
</reference>
<keyword id="KW-0175">Coiled coil</keyword>
<keyword id="KW-1267">Proteomics identification</keyword>
<keyword id="KW-1185">Reference proteome</keyword>